<proteinExistence type="evidence at protein level"/>
<comment type="interaction">
    <interactant intactId="EBI-23229">
        <id>P53253</id>
    </interactant>
    <interactant intactId="EBI-17402">
        <id>P32908</id>
        <label>SMC1</label>
    </interactant>
    <organismsDiffer>false</organismsDiffer>
    <experiments>4</experiments>
</comment>
<comment type="interaction">
    <interactant intactId="EBI-23229">
        <id>P53253</id>
    </interactant>
    <interactant intactId="EBI-22354">
        <id>P32618</id>
        <label>YEL043W</label>
    </interactant>
    <organismsDiffer>false</organismsDiffer>
    <experiments>4</experiments>
</comment>
<comment type="subcellular location">
    <subcellularLocation>
        <location evidence="5">Endoplasmic reticulum membrane</location>
        <topology evidence="5">Multi-pass membrane protein</topology>
    </subcellularLocation>
</comment>
<comment type="miscellaneous">
    <text evidence="4">Present with 996 molecules/cell in log phase SD medium.</text>
</comment>
<feature type="chain" id="PRO_0000202809" description="Protein NNF2">
    <location>
        <begin position="1"/>
        <end position="936"/>
    </location>
</feature>
<feature type="topological domain" description="Lumenal" evidence="1">
    <location>
        <begin position="1"/>
        <end position="41"/>
    </location>
</feature>
<feature type="transmembrane region" description="Helical" evidence="1">
    <location>
        <begin position="42"/>
        <end position="62"/>
    </location>
</feature>
<feature type="topological domain" description="Cytoplasmic" evidence="1">
    <location>
        <begin position="63"/>
        <end position="120"/>
    </location>
</feature>
<feature type="transmembrane region" description="Helical" evidence="1">
    <location>
        <begin position="121"/>
        <end position="141"/>
    </location>
</feature>
<feature type="topological domain" description="Lumenal" evidence="1">
    <location>
        <begin position="142"/>
        <end position="245"/>
    </location>
</feature>
<feature type="transmembrane region" description="Helical" evidence="1">
    <location>
        <begin position="246"/>
        <end position="266"/>
    </location>
</feature>
<feature type="topological domain" description="Cytoplasmic" evidence="1">
    <location>
        <begin position="267"/>
        <end position="936"/>
    </location>
</feature>
<feature type="region of interest" description="Disordered" evidence="2">
    <location>
        <begin position="297"/>
        <end position="351"/>
    </location>
</feature>
<feature type="region of interest" description="Disordered" evidence="2">
    <location>
        <begin position="387"/>
        <end position="437"/>
    </location>
</feature>
<feature type="region of interest" description="Disordered" evidence="2">
    <location>
        <begin position="512"/>
        <end position="533"/>
    </location>
</feature>
<feature type="compositionally biased region" description="Low complexity" evidence="2">
    <location>
        <begin position="299"/>
        <end position="308"/>
    </location>
</feature>
<feature type="compositionally biased region" description="Polar residues" evidence="2">
    <location>
        <begin position="325"/>
        <end position="351"/>
    </location>
</feature>
<feature type="compositionally biased region" description="Low complexity" evidence="2">
    <location>
        <begin position="394"/>
        <end position="405"/>
    </location>
</feature>
<feature type="compositionally biased region" description="Low complexity" evidence="2">
    <location>
        <begin position="414"/>
        <end position="428"/>
    </location>
</feature>
<feature type="compositionally biased region" description="Polar residues" evidence="2">
    <location>
        <begin position="512"/>
        <end position="529"/>
    </location>
</feature>
<feature type="cross-link" description="Glycyl lysine isopeptide (Lys-Gly) (interchain with G-Cter in ubiquitin)" evidence="3">
    <location>
        <position position="10"/>
    </location>
</feature>
<gene>
    <name type="primary">NNF2</name>
    <name type="ordered locus">YGR089W</name>
</gene>
<reference key="1">
    <citation type="journal article" date="1997" name="Nature">
        <title>The nucleotide sequence of Saccharomyces cerevisiae chromosome VII.</title>
        <authorList>
            <person name="Tettelin H."/>
            <person name="Agostoni-Carbone M.L."/>
            <person name="Albermann K."/>
            <person name="Albers M."/>
            <person name="Arroyo J."/>
            <person name="Backes U."/>
            <person name="Barreiros T."/>
            <person name="Bertani I."/>
            <person name="Bjourson A.J."/>
            <person name="Brueckner M."/>
            <person name="Bruschi C.V."/>
            <person name="Carignani G."/>
            <person name="Castagnoli L."/>
            <person name="Cerdan E."/>
            <person name="Clemente M.L."/>
            <person name="Coblenz A."/>
            <person name="Coglievina M."/>
            <person name="Coissac E."/>
            <person name="Defoor E."/>
            <person name="Del Bino S."/>
            <person name="Delius H."/>
            <person name="Delneri D."/>
            <person name="de Wergifosse P."/>
            <person name="Dujon B."/>
            <person name="Durand P."/>
            <person name="Entian K.-D."/>
            <person name="Eraso P."/>
            <person name="Escribano V."/>
            <person name="Fabiani L."/>
            <person name="Fartmann B."/>
            <person name="Feroli F."/>
            <person name="Feuermann M."/>
            <person name="Frontali L."/>
            <person name="Garcia-Gonzalez M."/>
            <person name="Garcia-Saez M.I."/>
            <person name="Goffeau A."/>
            <person name="Guerreiro P."/>
            <person name="Hani J."/>
            <person name="Hansen M."/>
            <person name="Hebling U."/>
            <person name="Hernandez K."/>
            <person name="Heumann K."/>
            <person name="Hilger F."/>
            <person name="Hofmann B."/>
            <person name="Indge K.J."/>
            <person name="James C.M."/>
            <person name="Klima R."/>
            <person name="Koetter P."/>
            <person name="Kramer B."/>
            <person name="Kramer W."/>
            <person name="Lauquin G."/>
            <person name="Leuther H."/>
            <person name="Louis E.J."/>
            <person name="Maillier E."/>
            <person name="Marconi A."/>
            <person name="Martegani E."/>
            <person name="Mazon M.J."/>
            <person name="Mazzoni C."/>
            <person name="McReynolds A.D.K."/>
            <person name="Melchioretto P."/>
            <person name="Mewes H.-W."/>
            <person name="Minenkova O."/>
            <person name="Mueller-Auer S."/>
            <person name="Nawrocki A."/>
            <person name="Netter P."/>
            <person name="Neu R."/>
            <person name="Nombela C."/>
            <person name="Oliver S.G."/>
            <person name="Panzeri L."/>
            <person name="Paoluzi S."/>
            <person name="Plevani P."/>
            <person name="Portetelle D."/>
            <person name="Portillo F."/>
            <person name="Potier S."/>
            <person name="Purnelle B."/>
            <person name="Rieger M."/>
            <person name="Riles L."/>
            <person name="Rinaldi T."/>
            <person name="Robben J."/>
            <person name="Rodrigues-Pousada C."/>
            <person name="Rodriguez-Belmonte E."/>
            <person name="Rodriguez-Torres A.M."/>
            <person name="Rose M."/>
            <person name="Ruzzi M."/>
            <person name="Saliola M."/>
            <person name="Sanchez-Perez M."/>
            <person name="Schaefer B."/>
            <person name="Schaefer M."/>
            <person name="Scharfe M."/>
            <person name="Schmidheini T."/>
            <person name="Schreer A."/>
            <person name="Skala J."/>
            <person name="Souciet J.-L."/>
            <person name="Steensma H.Y."/>
            <person name="Talla E."/>
            <person name="Thierry A."/>
            <person name="Vandenbol M."/>
            <person name="van der Aart Q.J.M."/>
            <person name="Van Dyck L."/>
            <person name="Vanoni M."/>
            <person name="Verhasselt P."/>
            <person name="Voet M."/>
            <person name="Volckaert G."/>
            <person name="Wambutt R."/>
            <person name="Watson M.D."/>
            <person name="Weber N."/>
            <person name="Wedler E."/>
            <person name="Wedler H."/>
            <person name="Wipfli P."/>
            <person name="Wolf K."/>
            <person name="Wright L.F."/>
            <person name="Zaccaria P."/>
            <person name="Zimmermann M."/>
            <person name="Zollner A."/>
            <person name="Kleine K."/>
        </authorList>
    </citation>
    <scope>NUCLEOTIDE SEQUENCE [LARGE SCALE GENOMIC DNA]</scope>
    <source>
        <strain>ATCC 204508 / S288c</strain>
    </source>
</reference>
<reference key="2">
    <citation type="journal article" date="2014" name="G3 (Bethesda)">
        <title>The reference genome sequence of Saccharomyces cerevisiae: Then and now.</title>
        <authorList>
            <person name="Engel S.R."/>
            <person name="Dietrich F.S."/>
            <person name="Fisk D.G."/>
            <person name="Binkley G."/>
            <person name="Balakrishnan R."/>
            <person name="Costanzo M.C."/>
            <person name="Dwight S.S."/>
            <person name="Hitz B.C."/>
            <person name="Karra K."/>
            <person name="Nash R.S."/>
            <person name="Weng S."/>
            <person name="Wong E.D."/>
            <person name="Lloyd P."/>
            <person name="Skrzypek M.S."/>
            <person name="Miyasato S.R."/>
            <person name="Simison M."/>
            <person name="Cherry J.M."/>
        </authorList>
    </citation>
    <scope>GENOME REANNOTATION</scope>
    <source>
        <strain>ATCC 204508 / S288c</strain>
    </source>
</reference>
<reference key="3">
    <citation type="journal article" date="2003" name="Nature">
        <title>Global analysis of protein localization in budding yeast.</title>
        <authorList>
            <person name="Huh W.-K."/>
            <person name="Falvo J.V."/>
            <person name="Gerke L.C."/>
            <person name="Carroll A.S."/>
            <person name="Howson R.W."/>
            <person name="Weissman J.S."/>
            <person name="O'Shea E.K."/>
        </authorList>
    </citation>
    <scope>SUBCELLULAR LOCATION [LARGE SCALE ANALYSIS]</scope>
</reference>
<reference key="4">
    <citation type="journal article" date="2003" name="Nature">
        <title>Global analysis of protein expression in yeast.</title>
        <authorList>
            <person name="Ghaemmaghami S."/>
            <person name="Huh W.-K."/>
            <person name="Bower K."/>
            <person name="Howson R.W."/>
            <person name="Belle A."/>
            <person name="Dephoure N."/>
            <person name="O'Shea E.K."/>
            <person name="Weissman J.S."/>
        </authorList>
    </citation>
    <scope>LEVEL OF PROTEIN EXPRESSION [LARGE SCALE ANALYSIS]</scope>
</reference>
<reference key="5">
    <citation type="journal article" date="2003" name="Nat. Biotechnol.">
        <title>A proteomics approach to understanding protein ubiquitination.</title>
        <authorList>
            <person name="Peng J."/>
            <person name="Schwartz D."/>
            <person name="Elias J.E."/>
            <person name="Thoreen C.C."/>
            <person name="Cheng D."/>
            <person name="Marsischky G."/>
            <person name="Roelofs J."/>
            <person name="Finley D."/>
            <person name="Gygi S.P."/>
        </authorList>
    </citation>
    <scope>UBIQUITINATION [LARGE SCALE ANALYSIS] AT LYS-10</scope>
    <scope>IDENTIFICATION BY MASS SPECTROMETRY</scope>
    <source>
        <strain>SUB592</strain>
    </source>
</reference>
<reference key="6">
    <citation type="journal article" date="2006" name="Proc. Natl. Acad. Sci. U.S.A.">
        <title>A global topology map of the Saccharomyces cerevisiae membrane proteome.</title>
        <authorList>
            <person name="Kim H."/>
            <person name="Melen K."/>
            <person name="Oesterberg M."/>
            <person name="von Heijne G."/>
        </authorList>
    </citation>
    <scope>TOPOLOGY [LARGE SCALE ANALYSIS]</scope>
    <source>
        <strain>ATCC 208353 / W303-1A</strain>
    </source>
</reference>
<reference key="7">
    <citation type="journal article" date="2009" name="Science">
        <title>Global analysis of Cdk1 substrate phosphorylation sites provides insights into evolution.</title>
        <authorList>
            <person name="Holt L.J."/>
            <person name="Tuch B.B."/>
            <person name="Villen J."/>
            <person name="Johnson A.D."/>
            <person name="Gygi S.P."/>
            <person name="Morgan D.O."/>
        </authorList>
    </citation>
    <scope>IDENTIFICATION BY MASS SPECTROMETRY [LARGE SCALE ANALYSIS]</scope>
</reference>
<evidence type="ECO:0000255" key="1"/>
<evidence type="ECO:0000256" key="2">
    <source>
        <dbReference type="SAM" id="MobiDB-lite"/>
    </source>
</evidence>
<evidence type="ECO:0000269" key="3">
    <source>
    </source>
</evidence>
<evidence type="ECO:0000269" key="4">
    <source>
    </source>
</evidence>
<evidence type="ECO:0000305" key="5"/>
<name>NNF2_YEAST</name>
<protein>
    <recommendedName>
        <fullName>Protein NNF2</fullName>
    </recommendedName>
</protein>
<accession>P53253</accession>
<accession>D6VUM1</accession>
<keyword id="KW-0256">Endoplasmic reticulum</keyword>
<keyword id="KW-1017">Isopeptide bond</keyword>
<keyword id="KW-0472">Membrane</keyword>
<keyword id="KW-1185">Reference proteome</keyword>
<keyword id="KW-0812">Transmembrane</keyword>
<keyword id="KW-1133">Transmembrane helix</keyword>
<keyword id="KW-0832">Ubl conjugation</keyword>
<organism>
    <name type="scientific">Saccharomyces cerevisiae (strain ATCC 204508 / S288c)</name>
    <name type="common">Baker's yeast</name>
    <dbReference type="NCBI Taxonomy" id="559292"/>
    <lineage>
        <taxon>Eukaryota</taxon>
        <taxon>Fungi</taxon>
        <taxon>Dikarya</taxon>
        <taxon>Ascomycota</taxon>
        <taxon>Saccharomycotina</taxon>
        <taxon>Saccharomycetes</taxon>
        <taxon>Saccharomycetales</taxon>
        <taxon>Saccharomycetaceae</taxon>
        <taxon>Saccharomyces</taxon>
    </lineage>
</organism>
<dbReference type="EMBL" id="Z72874">
    <property type="protein sequence ID" value="CAA97092.1"/>
    <property type="molecule type" value="Genomic_DNA"/>
</dbReference>
<dbReference type="EMBL" id="BK006941">
    <property type="protein sequence ID" value="DAA08182.1"/>
    <property type="molecule type" value="Genomic_DNA"/>
</dbReference>
<dbReference type="PIR" id="S64384">
    <property type="entry name" value="S64384"/>
</dbReference>
<dbReference type="RefSeq" id="NP_011603.1">
    <property type="nucleotide sequence ID" value="NM_001181218.1"/>
</dbReference>
<dbReference type="SMR" id="P53253"/>
<dbReference type="BioGRID" id="33331">
    <property type="interactions" value="285"/>
</dbReference>
<dbReference type="DIP" id="DIP-2984N"/>
<dbReference type="FunCoup" id="P53253">
    <property type="interactions" value="87"/>
</dbReference>
<dbReference type="IntAct" id="P53253">
    <property type="interactions" value="14"/>
</dbReference>
<dbReference type="MINT" id="P53253"/>
<dbReference type="STRING" id="4932.YGR089W"/>
<dbReference type="iPTMnet" id="P53253"/>
<dbReference type="PaxDb" id="4932-YGR089W"/>
<dbReference type="PeptideAtlas" id="P53253"/>
<dbReference type="EnsemblFungi" id="YGR089W_mRNA">
    <property type="protein sequence ID" value="YGR089W"/>
    <property type="gene ID" value="YGR089W"/>
</dbReference>
<dbReference type="GeneID" id="852980"/>
<dbReference type="KEGG" id="sce:YGR089W"/>
<dbReference type="AGR" id="SGD:S000003321"/>
<dbReference type="SGD" id="S000003321">
    <property type="gene designation" value="NNF2"/>
</dbReference>
<dbReference type="VEuPathDB" id="FungiDB:YGR089W"/>
<dbReference type="eggNOG" id="ENOG502QSPS">
    <property type="taxonomic scope" value="Eukaryota"/>
</dbReference>
<dbReference type="HOGENOM" id="CLU_013934_0_0_1"/>
<dbReference type="InParanoid" id="P53253"/>
<dbReference type="OMA" id="CSYDIQF"/>
<dbReference type="OrthoDB" id="4158994at2759"/>
<dbReference type="BioCyc" id="YEAST:G3O-30799-MONOMER"/>
<dbReference type="BioGRID-ORCS" id="852980">
    <property type="hits" value="0 hits in 10 CRISPR screens"/>
</dbReference>
<dbReference type="PRO" id="PR:P53253"/>
<dbReference type="Proteomes" id="UP000002311">
    <property type="component" value="Chromosome VII"/>
</dbReference>
<dbReference type="RNAct" id="P53253">
    <property type="molecule type" value="protein"/>
</dbReference>
<dbReference type="GO" id="GO:0005783">
    <property type="term" value="C:endoplasmic reticulum"/>
    <property type="evidence" value="ECO:0007005"/>
    <property type="project" value="SGD"/>
</dbReference>
<dbReference type="GO" id="GO:0005789">
    <property type="term" value="C:endoplasmic reticulum membrane"/>
    <property type="evidence" value="ECO:0007669"/>
    <property type="project" value="UniProtKB-SubCell"/>
</dbReference>
<sequence>MEEQFTNQKKVSHLQSLMNTKRSEQPTEFAKKHRFKDTLALFLVFLSFNHFTSLCLLVSFIVATKCKDFLANCFIILFLSKKPSRHIGEVAHIDISTSKVTNGSSNRKSNSRFFGNSKNSFVIPIPVLICEILFAMLLKIYGGDYFVKPIKNLAISIIASFLINDPSDCLSYATSCSVLYAVSTNTFQRVSHFFDIIQLFDMSLRGTGQSIKLFTVFRKYSQFFKKLFSLFLPMPFKMLGKHSDSMIYYLSFHILFFSFASSLLHPHRQTAENKPLKKGFNSTKPDVARVQGLQKMRISSSSSVSADSNTLEDQSPMIPNDPGGLSSSNQTIHPSQQNNSPVPLSSHSNILNPAASYPTDATSSFPYFTSMVKEYKSYQPSVISAEGSNSQAVTTTTSTTTSPTTFNFSGDNTSLSNEISLSDSSNGNSKKDSDFFSPSNDKYTNQLFELNVDFGNMFSSSKLSSDISVTSNLENFIRLLFRRKNQHLIAPLWSMVVTLKTTNFEKKYLQETSENSLTPTNSNTSYVSNQEKHDKDLDTINTHSVSSRISFTHAGKFKKSVFNNFEPSNTMALIAKTTSDDYNLLNLVSTNENIFNRNDNDYKVCIIDISTNSITFHIENLHDGELIVLVNGVIWSEVSCALILEHVGEEYVVVNGLVPSCSYDIQFINRLNHRDDYLVSDLIVRTCGNNNAIAGKFENLDFSFPSYYHRKFLSPLLTLKHSVLTTNANLSDERTKLKKTKKEFSKKLSLLRQEIDYFKGRISQNATHDEKSTLKVENLKVALQQSETAVNKLEMQLKTLTEKELELEEEYLKKKDLHLKNQLEFSKLEESLSKDLKNSEGRFQKVNQELVQLGSKLDKLNARNEKLQKEVDQNAEEIEKFSTQFLSKREKDRFRRKEYRIREANKFELTIKGLEQDINRLENENENIHSLIGNSY</sequence>